<accession>Q661S6</accession>
<dbReference type="EC" id="6.3.5.-" evidence="1"/>
<dbReference type="EMBL" id="CP000013">
    <property type="protein sequence ID" value="AAU07195.1"/>
    <property type="molecule type" value="Genomic_DNA"/>
</dbReference>
<dbReference type="RefSeq" id="WP_011193670.1">
    <property type="nucleotide sequence ID" value="NC_006156.1"/>
</dbReference>
<dbReference type="SMR" id="Q661S6"/>
<dbReference type="GeneID" id="45161130"/>
<dbReference type="KEGG" id="bga:BG0342"/>
<dbReference type="eggNOG" id="COG0064">
    <property type="taxonomic scope" value="Bacteria"/>
</dbReference>
<dbReference type="HOGENOM" id="CLU_019240_0_0_12"/>
<dbReference type="OrthoDB" id="9804078at2"/>
<dbReference type="Proteomes" id="UP000002276">
    <property type="component" value="Chromosome"/>
</dbReference>
<dbReference type="GO" id="GO:0050566">
    <property type="term" value="F:asparaginyl-tRNA synthase (glutamine-hydrolyzing) activity"/>
    <property type="evidence" value="ECO:0007669"/>
    <property type="project" value="RHEA"/>
</dbReference>
<dbReference type="GO" id="GO:0005524">
    <property type="term" value="F:ATP binding"/>
    <property type="evidence" value="ECO:0007669"/>
    <property type="project" value="UniProtKB-KW"/>
</dbReference>
<dbReference type="GO" id="GO:0050567">
    <property type="term" value="F:glutaminyl-tRNA synthase (glutamine-hydrolyzing) activity"/>
    <property type="evidence" value="ECO:0007669"/>
    <property type="project" value="UniProtKB-UniRule"/>
</dbReference>
<dbReference type="GO" id="GO:0070681">
    <property type="term" value="P:glutaminyl-tRNAGln biosynthesis via transamidation"/>
    <property type="evidence" value="ECO:0007669"/>
    <property type="project" value="TreeGrafter"/>
</dbReference>
<dbReference type="GO" id="GO:0006412">
    <property type="term" value="P:translation"/>
    <property type="evidence" value="ECO:0007669"/>
    <property type="project" value="UniProtKB-UniRule"/>
</dbReference>
<dbReference type="FunFam" id="1.10.10.410:FF:000001">
    <property type="entry name" value="Aspartyl/glutamyl-tRNA(Asn/Gln) amidotransferase subunit B"/>
    <property type="match status" value="1"/>
</dbReference>
<dbReference type="Gene3D" id="1.10.10.410">
    <property type="match status" value="1"/>
</dbReference>
<dbReference type="HAMAP" id="MF_00121">
    <property type="entry name" value="GatB"/>
    <property type="match status" value="1"/>
</dbReference>
<dbReference type="InterPro" id="IPR017959">
    <property type="entry name" value="Asn/Gln-tRNA_amidoTrfase_suB/E"/>
</dbReference>
<dbReference type="InterPro" id="IPR006075">
    <property type="entry name" value="Asn/Gln-tRNA_Trfase_suB/E_cat"/>
</dbReference>
<dbReference type="InterPro" id="IPR018027">
    <property type="entry name" value="Asn/Gln_amidotransferase"/>
</dbReference>
<dbReference type="InterPro" id="IPR003789">
    <property type="entry name" value="Asn/Gln_tRNA_amidoTrase-B-like"/>
</dbReference>
<dbReference type="InterPro" id="IPR004413">
    <property type="entry name" value="GatB"/>
</dbReference>
<dbReference type="InterPro" id="IPR023168">
    <property type="entry name" value="GatB_Yqey_C_2"/>
</dbReference>
<dbReference type="InterPro" id="IPR017958">
    <property type="entry name" value="Gln-tRNA_amidoTrfase_suB_CS"/>
</dbReference>
<dbReference type="InterPro" id="IPR014746">
    <property type="entry name" value="Gln_synth/guanido_kin_cat_dom"/>
</dbReference>
<dbReference type="NCBIfam" id="TIGR00133">
    <property type="entry name" value="gatB"/>
    <property type="match status" value="1"/>
</dbReference>
<dbReference type="NCBIfam" id="NF004012">
    <property type="entry name" value="PRK05477.1-2"/>
    <property type="match status" value="1"/>
</dbReference>
<dbReference type="NCBIfam" id="NF004014">
    <property type="entry name" value="PRK05477.1-4"/>
    <property type="match status" value="1"/>
</dbReference>
<dbReference type="PANTHER" id="PTHR11659">
    <property type="entry name" value="GLUTAMYL-TRNA GLN AMIDOTRANSFERASE SUBUNIT B MITOCHONDRIAL AND PROKARYOTIC PET112-RELATED"/>
    <property type="match status" value="1"/>
</dbReference>
<dbReference type="PANTHER" id="PTHR11659:SF0">
    <property type="entry name" value="GLUTAMYL-TRNA(GLN) AMIDOTRANSFERASE SUBUNIT B, MITOCHONDRIAL"/>
    <property type="match status" value="1"/>
</dbReference>
<dbReference type="Pfam" id="PF02934">
    <property type="entry name" value="GatB_N"/>
    <property type="match status" value="1"/>
</dbReference>
<dbReference type="Pfam" id="PF02637">
    <property type="entry name" value="GatB_Yqey"/>
    <property type="match status" value="1"/>
</dbReference>
<dbReference type="SMART" id="SM00845">
    <property type="entry name" value="GatB_Yqey"/>
    <property type="match status" value="1"/>
</dbReference>
<dbReference type="SUPFAM" id="SSF89095">
    <property type="entry name" value="GatB/YqeY motif"/>
    <property type="match status" value="1"/>
</dbReference>
<dbReference type="SUPFAM" id="SSF55931">
    <property type="entry name" value="Glutamine synthetase/guanido kinase"/>
    <property type="match status" value="1"/>
</dbReference>
<dbReference type="PROSITE" id="PS01234">
    <property type="entry name" value="GATB"/>
    <property type="match status" value="1"/>
</dbReference>
<evidence type="ECO:0000255" key="1">
    <source>
        <dbReference type="HAMAP-Rule" id="MF_00121"/>
    </source>
</evidence>
<organism>
    <name type="scientific">Borrelia garinii subsp. bavariensis (strain ATCC BAA-2496 / DSM 23469 / PBi)</name>
    <name type="common">Borreliella bavariensis</name>
    <dbReference type="NCBI Taxonomy" id="290434"/>
    <lineage>
        <taxon>Bacteria</taxon>
        <taxon>Pseudomonadati</taxon>
        <taxon>Spirochaetota</taxon>
        <taxon>Spirochaetia</taxon>
        <taxon>Spirochaetales</taxon>
        <taxon>Borreliaceae</taxon>
        <taxon>Borreliella</taxon>
    </lineage>
</organism>
<protein>
    <recommendedName>
        <fullName evidence="1">Aspartyl/glutamyl-tRNA(Asn/Gln) amidotransferase subunit B</fullName>
        <shortName evidence="1">Asp/Glu-ADT subunit B</shortName>
        <ecNumber evidence="1">6.3.5.-</ecNumber>
    </recommendedName>
</protein>
<keyword id="KW-0067">ATP-binding</keyword>
<keyword id="KW-0436">Ligase</keyword>
<keyword id="KW-0547">Nucleotide-binding</keyword>
<keyword id="KW-0648">Protein biosynthesis</keyword>
<name>GATB_BORGP</name>
<gene>
    <name evidence="1" type="primary">gatB</name>
    <name type="ordered locus">BG0342</name>
</gene>
<reference key="1">
    <citation type="journal article" date="2004" name="Nucleic Acids Res.">
        <title>Comparative analysis of the Borrelia garinii genome.</title>
        <authorList>
            <person name="Gloeckner G."/>
            <person name="Lehmann R."/>
            <person name="Romualdi A."/>
            <person name="Pradella S."/>
            <person name="Schulte-Spechtel U."/>
            <person name="Schilhabel M."/>
            <person name="Wilske B."/>
            <person name="Suehnel J."/>
            <person name="Platzer M."/>
        </authorList>
    </citation>
    <scope>NUCLEOTIDE SEQUENCE [LARGE SCALE GENOMIC DNA]</scope>
    <source>
        <strain>ATCC BAA-2496 / DSM 23469 / PBi</strain>
    </source>
</reference>
<feature type="chain" id="PRO_0000241199" description="Aspartyl/glutamyl-tRNA(Asn/Gln) amidotransferase subunit B">
    <location>
        <begin position="1"/>
        <end position="485"/>
    </location>
</feature>
<sequence>MEYKLVIGLEIHIQLGLRTKAFCGCKNEFGGVPNSRICPICLGLPGSLPSVNVELINSAILAGHATNSNIRHVVKFDRKHYYYPDLPKGYQISQNDKPICERGSLLIETSSGLKKINIIRIHMEEDSGKSLHLLDSENQSYIDFNRSGAPLLEIVSAPDISSGDEAVAFLTSLREIFRYLDLSECNMENGSFRCDVNVNLIITESGVEHKTPIAEIKNLNSFKSIKAAIEYEELRQKEEWVQFRKTLDSCGKHTRGFDDKNGVTVVQRDKETVSDYRYFQEPDLPLIEIDDFYIANIKKIKLIEFPFDARVRLKDQYGLSDFDVITLTTDKHLLRYFEEAAINASDPKKVANWILSEVLSVLNDKGISVLEFNLFPSYITELVEFIVAGKISGKMAKKVFLEMMSREVPASVIISENQLEQISDKFVIRQIVFEVLNENPKSIELYKKGKDHAIKFMMGQIMKKSSGKINPILANEILLQSLSNV</sequence>
<comment type="function">
    <text evidence="1">Allows the formation of correctly charged Asn-tRNA(Asn) or Gln-tRNA(Gln) through the transamidation of misacylated Asp-tRNA(Asn) or Glu-tRNA(Gln) in organisms which lack either or both of asparaginyl-tRNA or glutaminyl-tRNA synthetases. The reaction takes place in the presence of glutamine and ATP through an activated phospho-Asp-tRNA(Asn) or phospho-Glu-tRNA(Gln).</text>
</comment>
<comment type="catalytic activity">
    <reaction evidence="1">
        <text>L-glutamyl-tRNA(Gln) + L-glutamine + ATP + H2O = L-glutaminyl-tRNA(Gln) + L-glutamate + ADP + phosphate + H(+)</text>
        <dbReference type="Rhea" id="RHEA:17521"/>
        <dbReference type="Rhea" id="RHEA-COMP:9681"/>
        <dbReference type="Rhea" id="RHEA-COMP:9684"/>
        <dbReference type="ChEBI" id="CHEBI:15377"/>
        <dbReference type="ChEBI" id="CHEBI:15378"/>
        <dbReference type="ChEBI" id="CHEBI:29985"/>
        <dbReference type="ChEBI" id="CHEBI:30616"/>
        <dbReference type="ChEBI" id="CHEBI:43474"/>
        <dbReference type="ChEBI" id="CHEBI:58359"/>
        <dbReference type="ChEBI" id="CHEBI:78520"/>
        <dbReference type="ChEBI" id="CHEBI:78521"/>
        <dbReference type="ChEBI" id="CHEBI:456216"/>
    </reaction>
</comment>
<comment type="catalytic activity">
    <reaction evidence="1">
        <text>L-aspartyl-tRNA(Asn) + L-glutamine + ATP + H2O = L-asparaginyl-tRNA(Asn) + L-glutamate + ADP + phosphate + 2 H(+)</text>
        <dbReference type="Rhea" id="RHEA:14513"/>
        <dbReference type="Rhea" id="RHEA-COMP:9674"/>
        <dbReference type="Rhea" id="RHEA-COMP:9677"/>
        <dbReference type="ChEBI" id="CHEBI:15377"/>
        <dbReference type="ChEBI" id="CHEBI:15378"/>
        <dbReference type="ChEBI" id="CHEBI:29985"/>
        <dbReference type="ChEBI" id="CHEBI:30616"/>
        <dbReference type="ChEBI" id="CHEBI:43474"/>
        <dbReference type="ChEBI" id="CHEBI:58359"/>
        <dbReference type="ChEBI" id="CHEBI:78515"/>
        <dbReference type="ChEBI" id="CHEBI:78516"/>
        <dbReference type="ChEBI" id="CHEBI:456216"/>
    </reaction>
</comment>
<comment type="subunit">
    <text evidence="1">Heterotrimer of A, B and C subunits.</text>
</comment>
<comment type="similarity">
    <text evidence="1">Belongs to the GatB/GatE family. GatB subfamily.</text>
</comment>
<proteinExistence type="inferred from homology"/>